<dbReference type="EC" id="1.11.1.13"/>
<dbReference type="EMBL" id="M60672">
    <property type="protein sequence ID" value="AAA33744.1"/>
    <property type="molecule type" value="Genomic_DNA"/>
</dbReference>
<dbReference type="EMBL" id="M77513">
    <property type="protein sequence ID" value="AAA33743.1"/>
    <property type="molecule type" value="Genomic_DNA"/>
</dbReference>
<dbReference type="EMBL" id="J04624">
    <property type="protein sequence ID" value="AAA33742.1"/>
    <property type="molecule type" value="mRNA"/>
</dbReference>
<dbReference type="PIR" id="JN0092">
    <property type="entry name" value="A33271"/>
</dbReference>
<dbReference type="PDB" id="1MN1">
    <property type="method" value="X-ray"/>
    <property type="resolution" value="2.00 A"/>
    <property type="chains" value="A=22-378"/>
</dbReference>
<dbReference type="PDB" id="1MN2">
    <property type="method" value="X-ray"/>
    <property type="resolution" value="2.00 A"/>
    <property type="chains" value="A=22-378"/>
</dbReference>
<dbReference type="PDB" id="1MNP">
    <property type="method" value="X-ray"/>
    <property type="resolution" value="2.00 A"/>
    <property type="chains" value="A=22-378"/>
</dbReference>
<dbReference type="PDB" id="1YYD">
    <property type="method" value="X-ray"/>
    <property type="resolution" value="1.45 A"/>
    <property type="chains" value="A=22-378"/>
</dbReference>
<dbReference type="PDB" id="1YYG">
    <property type="method" value="X-ray"/>
    <property type="resolution" value="1.60 A"/>
    <property type="chains" value="A=22-378"/>
</dbReference>
<dbReference type="PDB" id="1YZP">
    <property type="method" value="X-ray"/>
    <property type="resolution" value="1.60 A"/>
    <property type="chains" value="A=22-378"/>
</dbReference>
<dbReference type="PDB" id="1YZR">
    <property type="method" value="X-ray"/>
    <property type="resolution" value="1.60 A"/>
    <property type="chains" value="A=22-378"/>
</dbReference>
<dbReference type="PDB" id="3M5Q">
    <property type="method" value="X-ray"/>
    <property type="resolution" value="0.93 A"/>
    <property type="chains" value="A=22-378"/>
</dbReference>
<dbReference type="PDB" id="3M8M">
    <property type="method" value="X-ray"/>
    <property type="resolution" value="1.05 A"/>
    <property type="chains" value="A=22-378"/>
</dbReference>
<dbReference type="PDBsum" id="1MN1"/>
<dbReference type="PDBsum" id="1MN2"/>
<dbReference type="PDBsum" id="1MNP"/>
<dbReference type="PDBsum" id="1YYD"/>
<dbReference type="PDBsum" id="1YYG"/>
<dbReference type="PDBsum" id="1YZP"/>
<dbReference type="PDBsum" id="1YZR"/>
<dbReference type="PDBsum" id="3M5Q"/>
<dbReference type="PDBsum" id="3M8M"/>
<dbReference type="SMR" id="Q02567"/>
<dbReference type="CAZy" id="AA2">
    <property type="family name" value="Auxiliary Activities 2"/>
</dbReference>
<dbReference type="PeroxiBase" id="2379">
    <property type="entry name" value="PcMnP01-1A_RP78"/>
</dbReference>
<dbReference type="PeroxiBase" id="3866">
    <property type="entry name" value="PcMnP01_OGC101"/>
</dbReference>
<dbReference type="GlyCosmos" id="Q02567">
    <property type="glycosylation" value="3 sites, No reported glycans"/>
</dbReference>
<dbReference type="VEuPathDB" id="FungiDB:AGR57_13026"/>
<dbReference type="OMA" id="PEFHAND"/>
<dbReference type="BioCyc" id="MetaCyc:MONOMER-14335"/>
<dbReference type="BRENDA" id="1.11.1.13">
    <property type="organism ID" value="1380"/>
</dbReference>
<dbReference type="SABIO-RK" id="Q02567"/>
<dbReference type="EvolutionaryTrace" id="Q02567"/>
<dbReference type="GO" id="GO:0005576">
    <property type="term" value="C:extracellular region"/>
    <property type="evidence" value="ECO:0007669"/>
    <property type="project" value="UniProtKB-SubCell"/>
</dbReference>
<dbReference type="GO" id="GO:0020037">
    <property type="term" value="F:heme binding"/>
    <property type="evidence" value="ECO:0007669"/>
    <property type="project" value="InterPro"/>
</dbReference>
<dbReference type="GO" id="GO:0016689">
    <property type="term" value="F:manganese peroxidase activity"/>
    <property type="evidence" value="ECO:0007669"/>
    <property type="project" value="UniProtKB-EC"/>
</dbReference>
<dbReference type="GO" id="GO:0046872">
    <property type="term" value="F:metal ion binding"/>
    <property type="evidence" value="ECO:0007669"/>
    <property type="project" value="UniProtKB-KW"/>
</dbReference>
<dbReference type="GO" id="GO:0034599">
    <property type="term" value="P:cellular response to oxidative stress"/>
    <property type="evidence" value="ECO:0007669"/>
    <property type="project" value="InterPro"/>
</dbReference>
<dbReference type="GO" id="GO:0042744">
    <property type="term" value="P:hydrogen peroxide catabolic process"/>
    <property type="evidence" value="ECO:0007669"/>
    <property type="project" value="UniProtKB-KW"/>
</dbReference>
<dbReference type="GO" id="GO:0046274">
    <property type="term" value="P:lignin catabolic process"/>
    <property type="evidence" value="ECO:0007669"/>
    <property type="project" value="UniProtKB-KW"/>
</dbReference>
<dbReference type="GO" id="GO:0000302">
    <property type="term" value="P:response to reactive oxygen species"/>
    <property type="evidence" value="ECO:0007669"/>
    <property type="project" value="TreeGrafter"/>
</dbReference>
<dbReference type="CDD" id="cd00692">
    <property type="entry name" value="ligninase"/>
    <property type="match status" value="1"/>
</dbReference>
<dbReference type="Gene3D" id="1.10.520.10">
    <property type="match status" value="1"/>
</dbReference>
<dbReference type="Gene3D" id="1.10.420.10">
    <property type="entry name" value="Peroxidase, domain 2"/>
    <property type="match status" value="1"/>
</dbReference>
<dbReference type="InterPro" id="IPR044831">
    <property type="entry name" value="Ccp1-like"/>
</dbReference>
<dbReference type="InterPro" id="IPR002016">
    <property type="entry name" value="Haem_peroxidase"/>
</dbReference>
<dbReference type="InterPro" id="IPR010255">
    <property type="entry name" value="Haem_peroxidase_sf"/>
</dbReference>
<dbReference type="InterPro" id="IPR001621">
    <property type="entry name" value="Ligninase"/>
</dbReference>
<dbReference type="InterPro" id="IPR024589">
    <property type="entry name" value="Ligninase_C"/>
</dbReference>
<dbReference type="InterPro" id="IPR019794">
    <property type="entry name" value="Peroxidases_AS"/>
</dbReference>
<dbReference type="InterPro" id="IPR019793">
    <property type="entry name" value="Peroxidases_heam-ligand_BS"/>
</dbReference>
<dbReference type="PANTHER" id="PTHR31356:SF66">
    <property type="entry name" value="CATALASE-PEROXIDASE"/>
    <property type="match status" value="1"/>
</dbReference>
<dbReference type="PANTHER" id="PTHR31356">
    <property type="entry name" value="THYLAKOID LUMENAL 29 KDA PROTEIN, CHLOROPLASTIC-RELATED"/>
    <property type="match status" value="1"/>
</dbReference>
<dbReference type="Pfam" id="PF00141">
    <property type="entry name" value="peroxidase"/>
    <property type="match status" value="1"/>
</dbReference>
<dbReference type="Pfam" id="PF11895">
    <property type="entry name" value="Peroxidase_ext"/>
    <property type="match status" value="1"/>
</dbReference>
<dbReference type="PRINTS" id="PR00462">
    <property type="entry name" value="LIGNINASE"/>
</dbReference>
<dbReference type="PRINTS" id="PR00458">
    <property type="entry name" value="PEROXIDASE"/>
</dbReference>
<dbReference type="SUPFAM" id="SSF48113">
    <property type="entry name" value="Heme-dependent peroxidases"/>
    <property type="match status" value="1"/>
</dbReference>
<dbReference type="PROSITE" id="PS00435">
    <property type="entry name" value="PEROXIDASE_1"/>
    <property type="match status" value="1"/>
</dbReference>
<dbReference type="PROSITE" id="PS00436">
    <property type="entry name" value="PEROXIDASE_2"/>
    <property type="match status" value="1"/>
</dbReference>
<dbReference type="PROSITE" id="PS50873">
    <property type="entry name" value="PEROXIDASE_4"/>
    <property type="match status" value="1"/>
</dbReference>
<reference key="1">
    <citation type="journal article" date="1990" name="Gene">
        <title>Characterization of a gene encoding a manganese peroxidase from Phanerochaete chrysosporium.</title>
        <authorList>
            <person name="Godfrey B.J."/>
            <person name="Mayfield M.B."/>
            <person name="Brown J.A."/>
            <person name="Gold M.H."/>
        </authorList>
    </citation>
    <scope>NUCLEOTIDE SEQUENCE [GENOMIC DNA]</scope>
    <source>
        <strain>ATCC 201542 / OGC101</strain>
    </source>
</reference>
<reference key="2">
    <citation type="journal article" date="1989" name="J. Biol. Chem.">
        <title>Characterization of a cDNA encoding a manganese peroxidase, from the lignin-degrading basidiomycete Phanerochaete chrysosporium.</title>
        <authorList>
            <person name="Pribnow D."/>
            <person name="Mayfield M.B."/>
            <person name="Nipper V.J."/>
            <person name="Brown J.A."/>
            <person name="Gold M.H."/>
        </authorList>
    </citation>
    <scope>NUCLEOTIDE SEQUENCE [MRNA]</scope>
    <scope>PROTEIN SEQUENCE OF 22-41</scope>
    <source>
        <strain>ATCC 201542 / OGC101</strain>
    </source>
</reference>
<reference key="3">
    <citation type="journal article" date="1996" name="Biochemistry">
        <title>Characterization of manganese(II) binding site mutants of manganese peroxidase.</title>
        <authorList>
            <person name="Kishi K."/>
            <person name="Kusters-van Someren M."/>
            <person name="Mayfield M.B."/>
            <person name="Sun J."/>
            <person name="Loehr T.M."/>
            <person name="Gold M.H."/>
        </authorList>
    </citation>
    <scope>METAL-BINDING</scope>
</reference>
<reference key="4">
    <citation type="journal article" date="1994" name="J. Biol. Chem.">
        <title>The crystal structure of manganese peroxidase from Phanerochaete chrysosporium at 2.06-A resolution.</title>
        <authorList>
            <person name="Sundaramoorthy M."/>
            <person name="Kishi K."/>
            <person name="Gold M.H."/>
            <person name="Poulos T.L."/>
        </authorList>
    </citation>
    <scope>X-RAY CRYSTALLOGRAPHY (2.06 ANGSTROMS)</scope>
</reference>
<reference key="5">
    <citation type="journal article" date="1997" name="J. Biol. Chem.">
        <title>Crystal structures of substrate binding site mutants of manganese peroxidase.</title>
        <authorList>
            <person name="Sundaramoorthy M."/>
            <person name="Kishi K."/>
            <person name="Gold M.H."/>
            <person name="Poulos T.L."/>
        </authorList>
    </citation>
    <scope>X-RAY CRYSTALLOGRAPHY (2.0 ANGSTROMS) OF MUTANTS</scope>
</reference>
<evidence type="ECO:0000255" key="1"/>
<evidence type="ECO:0000269" key="2">
    <source>
    </source>
</evidence>
<evidence type="ECO:0000305" key="3"/>
<evidence type="ECO:0007829" key="4">
    <source>
        <dbReference type="PDB" id="1YYD"/>
    </source>
</evidence>
<evidence type="ECO:0007829" key="5">
    <source>
        <dbReference type="PDB" id="3M5Q"/>
    </source>
</evidence>
<organism>
    <name type="scientific">Phanerodontia chrysosporium</name>
    <name type="common">White-rot fungus</name>
    <name type="synonym">Sporotrichum pruinosum</name>
    <dbReference type="NCBI Taxonomy" id="2822231"/>
    <lineage>
        <taxon>Eukaryota</taxon>
        <taxon>Fungi</taxon>
        <taxon>Dikarya</taxon>
        <taxon>Basidiomycota</taxon>
        <taxon>Agaricomycotina</taxon>
        <taxon>Agaricomycetes</taxon>
        <taxon>Polyporales</taxon>
        <taxon>Phanerochaetaceae</taxon>
        <taxon>Phanerodontia</taxon>
    </lineage>
</organism>
<accession>Q02567</accession>
<accession>Q01788</accession>
<keyword id="KW-0002">3D-structure</keyword>
<keyword id="KW-0106">Calcium</keyword>
<keyword id="KW-0903">Direct protein sequencing</keyword>
<keyword id="KW-1015">Disulfide bond</keyword>
<keyword id="KW-0325">Glycoprotein</keyword>
<keyword id="KW-0349">Heme</keyword>
<keyword id="KW-0376">Hydrogen peroxide</keyword>
<keyword id="KW-0408">Iron</keyword>
<keyword id="KW-0439">Lignin degradation</keyword>
<keyword id="KW-0464">Manganese</keyword>
<keyword id="KW-0479">Metal-binding</keyword>
<keyword id="KW-0560">Oxidoreductase</keyword>
<keyword id="KW-0575">Peroxidase</keyword>
<keyword id="KW-0964">Secreted</keyword>
<keyword id="KW-0732">Signal</keyword>
<feature type="signal peptide" evidence="2">
    <location>
        <begin position="1"/>
        <end position="21"/>
    </location>
</feature>
<feature type="chain" id="PRO_0000023778" description="Manganese peroxidase 1">
    <location>
        <begin position="22"/>
        <end position="378"/>
    </location>
</feature>
<feature type="active site" description="Proton acceptor">
    <location>
        <position position="67"/>
    </location>
</feature>
<feature type="binding site">
    <location>
        <position position="56"/>
    </location>
    <ligand>
        <name>Mn(2+)</name>
        <dbReference type="ChEBI" id="CHEBI:29035"/>
    </ligand>
</feature>
<feature type="binding site">
    <location>
        <position position="60"/>
    </location>
    <ligand>
        <name>Mn(2+)</name>
        <dbReference type="ChEBI" id="CHEBI:29035"/>
    </ligand>
</feature>
<feature type="binding site">
    <location>
        <position position="68"/>
    </location>
    <ligand>
        <name>Ca(2+)</name>
        <dbReference type="ChEBI" id="CHEBI:29108"/>
        <label>1</label>
    </ligand>
</feature>
<feature type="binding site">
    <location>
        <position position="83"/>
    </location>
    <ligand>
        <name>Ca(2+)</name>
        <dbReference type="ChEBI" id="CHEBI:29108"/>
        <label>1</label>
    </ligand>
</feature>
<feature type="binding site">
    <location>
        <position position="85"/>
    </location>
    <ligand>
        <name>Ca(2+)</name>
        <dbReference type="ChEBI" id="CHEBI:29108"/>
        <label>1</label>
    </ligand>
</feature>
<feature type="binding site">
    <location>
        <position position="87"/>
    </location>
    <ligand>
        <name>Ca(2+)</name>
        <dbReference type="ChEBI" id="CHEBI:29108"/>
        <label>1</label>
    </ligand>
</feature>
<feature type="binding site" description="axial binding residue">
    <location>
        <position position="194"/>
    </location>
    <ligand>
        <name>heme b</name>
        <dbReference type="ChEBI" id="CHEBI:60344"/>
    </ligand>
    <ligandPart>
        <name>Fe</name>
        <dbReference type="ChEBI" id="CHEBI:18248"/>
    </ligandPart>
</feature>
<feature type="binding site">
    <location>
        <position position="195"/>
    </location>
    <ligand>
        <name>Ca(2+)</name>
        <dbReference type="ChEBI" id="CHEBI:29108"/>
        <label>2</label>
    </ligand>
</feature>
<feature type="binding site">
    <location>
        <position position="200"/>
    </location>
    <ligand>
        <name>Mn(2+)</name>
        <dbReference type="ChEBI" id="CHEBI:29035"/>
    </ligand>
</feature>
<feature type="binding site">
    <location>
        <position position="212"/>
    </location>
    <ligand>
        <name>Ca(2+)</name>
        <dbReference type="ChEBI" id="CHEBI:29108"/>
        <label>2</label>
    </ligand>
</feature>
<feature type="binding site">
    <location>
        <position position="214"/>
    </location>
    <ligand>
        <name>Ca(2+)</name>
        <dbReference type="ChEBI" id="CHEBI:29108"/>
        <label>2</label>
    </ligand>
</feature>
<feature type="binding site">
    <location>
        <position position="217"/>
    </location>
    <ligand>
        <name>Ca(2+)</name>
        <dbReference type="ChEBI" id="CHEBI:29108"/>
        <label>2</label>
    </ligand>
</feature>
<feature type="binding site">
    <location>
        <position position="219"/>
    </location>
    <ligand>
        <name>Ca(2+)</name>
        <dbReference type="ChEBI" id="CHEBI:29108"/>
        <label>2</label>
    </ligand>
</feature>
<feature type="site" description="Transition state stabilizer">
    <location>
        <position position="63"/>
    </location>
</feature>
<feature type="glycosylation site" description="N-linked (GlcNAc...) asparagine" evidence="1">
    <location>
        <position position="97"/>
    </location>
</feature>
<feature type="glycosylation site" description="N-linked (GlcNAc...) asparagine">
    <location>
        <position position="152"/>
    </location>
</feature>
<feature type="glycosylation site" description="N-linked (GlcNAc...) asparagine" evidence="1">
    <location>
        <position position="238"/>
    </location>
</feature>
<feature type="disulfide bond">
    <location>
        <begin position="24"/>
        <end position="36"/>
    </location>
</feature>
<feature type="disulfide bond">
    <location>
        <begin position="35"/>
        <end position="310"/>
    </location>
</feature>
<feature type="disulfide bond">
    <location>
        <begin position="54"/>
        <end position="138"/>
    </location>
</feature>
<feature type="disulfide bond">
    <location>
        <begin position="274"/>
        <end position="340"/>
    </location>
</feature>
<feature type="disulfide bond">
    <location>
        <begin position="362"/>
        <end position="369"/>
    </location>
</feature>
<feature type="sequence conflict" description="In Ref. 2; AAA33742." evidence="3" ref="2">
    <original>S</original>
    <variation>L</variation>
    <location>
        <position position="75"/>
    </location>
</feature>
<feature type="strand" evidence="5">
    <location>
        <begin position="25"/>
        <end position="27"/>
    </location>
</feature>
<feature type="helix" evidence="5">
    <location>
        <begin position="33"/>
        <end position="37"/>
    </location>
</feature>
<feature type="helix" evidence="5">
    <location>
        <begin position="38"/>
        <end position="48"/>
    </location>
</feature>
<feature type="turn" evidence="5">
    <location>
        <begin position="49"/>
        <end position="52"/>
    </location>
</feature>
<feature type="strand" evidence="4">
    <location>
        <begin position="53"/>
        <end position="55"/>
    </location>
</feature>
<feature type="helix" evidence="5">
    <location>
        <begin position="56"/>
        <end position="70"/>
    </location>
</feature>
<feature type="turn" evidence="5">
    <location>
        <begin position="74"/>
        <end position="76"/>
    </location>
</feature>
<feature type="helix" evidence="5">
    <location>
        <begin position="78"/>
        <end position="80"/>
    </location>
</feature>
<feature type="strand" evidence="5">
    <location>
        <begin position="83"/>
        <end position="85"/>
    </location>
</feature>
<feature type="helix" evidence="5">
    <location>
        <begin position="87"/>
        <end position="90"/>
    </location>
</feature>
<feature type="turn" evidence="5">
    <location>
        <begin position="92"/>
        <end position="94"/>
    </location>
</feature>
<feature type="helix" evidence="5">
    <location>
        <begin position="95"/>
        <end position="97"/>
    </location>
</feature>
<feature type="helix" evidence="5">
    <location>
        <begin position="99"/>
        <end position="101"/>
    </location>
</feature>
<feature type="turn" evidence="5">
    <location>
        <begin position="102"/>
        <end position="104"/>
    </location>
</feature>
<feature type="helix" evidence="5">
    <location>
        <begin position="105"/>
        <end position="117"/>
    </location>
</feature>
<feature type="helix" evidence="5">
    <location>
        <begin position="123"/>
        <end position="136"/>
    </location>
</feature>
<feature type="helix" evidence="5">
    <location>
        <begin position="169"/>
        <end position="180"/>
    </location>
</feature>
<feature type="helix" evidence="5">
    <location>
        <begin position="184"/>
        <end position="190"/>
    </location>
</feature>
<feature type="helix" evidence="5">
    <location>
        <begin position="191"/>
        <end position="196"/>
    </location>
</feature>
<feature type="strand" evidence="5">
    <location>
        <begin position="198"/>
        <end position="203"/>
    </location>
</feature>
<feature type="strand" evidence="5">
    <location>
        <begin position="209"/>
        <end position="213"/>
    </location>
</feature>
<feature type="helix" evidence="5">
    <location>
        <begin position="221"/>
        <end position="226"/>
    </location>
</feature>
<feature type="helix" evidence="5">
    <location>
        <begin position="261"/>
        <end position="268"/>
    </location>
</feature>
<feature type="turn" evidence="5">
    <location>
        <begin position="270"/>
        <end position="272"/>
    </location>
</feature>
<feature type="helix" evidence="5">
    <location>
        <begin position="273"/>
        <end position="278"/>
    </location>
</feature>
<feature type="turn" evidence="5">
    <location>
        <begin position="279"/>
        <end position="281"/>
    </location>
</feature>
<feature type="helix" evidence="5">
    <location>
        <begin position="283"/>
        <end position="297"/>
    </location>
</feature>
<feature type="turn" evidence="5">
    <location>
        <begin position="298"/>
        <end position="301"/>
    </location>
</feature>
<feature type="helix" evidence="5">
    <location>
        <begin position="304"/>
        <end position="306"/>
    </location>
</feature>
<feature type="strand" evidence="5">
    <location>
        <begin position="307"/>
        <end position="309"/>
    </location>
</feature>
<feature type="helix" evidence="5">
    <location>
        <begin position="311"/>
        <end position="313"/>
    </location>
</feature>
<feature type="helix" evidence="5">
    <location>
        <begin position="333"/>
        <end position="335"/>
    </location>
</feature>
<feature type="strand" evidence="5">
    <location>
        <begin position="365"/>
        <end position="367"/>
    </location>
</feature>
<protein>
    <recommendedName>
        <fullName>Manganese peroxidase 1</fullName>
        <shortName>MnP-1</shortName>
        <shortName>MnP1</shortName>
        <ecNumber>1.11.1.13</ecNumber>
    </recommendedName>
    <alternativeName>
        <fullName>Manganese peroxidase isozyme 1</fullName>
    </alternativeName>
    <alternativeName>
        <fullName>Peroxidase manganese-dependent 1</fullName>
    </alternativeName>
    <alternativeName>
        <fullName>Peroxidase manganese-dependent I</fullName>
    </alternativeName>
</protein>
<sequence length="378" mass="39557">MAFKSLIAFVALAAAVRAAPTAVCPDGTRVSHAACCAFIPLAQDLQETIFQNECGEDAHEVIRLTFHDAIAISRSQGPKAGGGADGSMLLFPTVEPNFSANNGIDDSVNNLIPFMQKHNTISAADLVQFAGAVALSNCPGAPRLEFLAGRPNKTIAAVDGLIPEPQDSVTKILQRFEDAGGFTPFEVVSLLASHSVARADKVDQTIDAAPFDSTPFTFDTQVFLEVLLKGVGFPGSANNTGEVASPLPLGSGSDTGEMRLQSDFALAHDPRTACIWQGFVNEQAFMAASFRAAMSKLAVLGHNRNSLIDCSDVVPVPKPATGQPAMFPASTGPQDLELSCPSERFPTLTTQPGASQSLIAHCPDGSMSCPGVQFNGPA</sequence>
<proteinExistence type="evidence at protein level"/>
<comment type="function">
    <text>Catalyzes the oxidation of Mn(2+) to Mn(3+). The latter, acting as a diffusible redox mediator, is capable of oxidizing a variety of lignin compounds.</text>
</comment>
<comment type="catalytic activity">
    <reaction>
        <text>2 Mn(2+) + H2O2 + 2 H(+) = 2 Mn(3+) + 2 H2O</text>
        <dbReference type="Rhea" id="RHEA:22776"/>
        <dbReference type="ChEBI" id="CHEBI:15377"/>
        <dbReference type="ChEBI" id="CHEBI:15378"/>
        <dbReference type="ChEBI" id="CHEBI:16240"/>
        <dbReference type="ChEBI" id="CHEBI:29035"/>
        <dbReference type="ChEBI" id="CHEBI:29041"/>
        <dbReference type="EC" id="1.11.1.13"/>
    </reaction>
</comment>
<comment type="cofactor">
    <cofactor>
        <name>Ca(2+)</name>
        <dbReference type="ChEBI" id="CHEBI:29108"/>
    </cofactor>
    <text>Binds 2 calcium ions per subunit.</text>
</comment>
<comment type="cofactor">
    <cofactor>
        <name>heme b</name>
        <dbReference type="ChEBI" id="CHEBI:60344"/>
    </cofactor>
    <text>Binds 1 heme b (iron(II)-protoporphyrin IX) group per subunit.</text>
</comment>
<comment type="subcellular location">
    <subcellularLocation>
        <location>Secreted</location>
    </subcellularLocation>
</comment>
<comment type="induction">
    <text>During wound-healing and by factors which induce suberization.</text>
</comment>
<comment type="similarity">
    <text evidence="3">Belongs to the peroxidase family. Ligninase subfamily.</text>
</comment>
<name>PEM1_PHACH</name>
<gene>
    <name type="primary">MNP1</name>
</gene>